<evidence type="ECO:0000255" key="1">
    <source>
        <dbReference type="HAMAP-Rule" id="MF_00009"/>
    </source>
</evidence>
<name>YBEY_STRP2</name>
<sequence length="165" mass="19245">MYIEMVDETGQVSKEMLQQTQEILEFAAQKLGKEDKEMAVTFVTNERSHELNLEYRDTDRPTDVISLEYKPELEIAFDEEDLLENPELAEMMSEFDAYIGELFISIDKAHEQAEEYGHSFEREMGFLAVHGFLHINGYDHYTPEEEAEMFGLQEEILTAYGLTRQ</sequence>
<gene>
    <name evidence="1" type="primary">ybeY</name>
    <name type="ordered locus">SPD_0855</name>
</gene>
<keyword id="KW-0963">Cytoplasm</keyword>
<keyword id="KW-0255">Endonuclease</keyword>
<keyword id="KW-0378">Hydrolase</keyword>
<keyword id="KW-0479">Metal-binding</keyword>
<keyword id="KW-0540">Nuclease</keyword>
<keyword id="KW-1185">Reference proteome</keyword>
<keyword id="KW-0690">Ribosome biogenesis</keyword>
<keyword id="KW-0698">rRNA processing</keyword>
<keyword id="KW-0862">Zinc</keyword>
<accession>Q04KW1</accession>
<protein>
    <recommendedName>
        <fullName evidence="1">Endoribonuclease YbeY</fullName>
        <ecNumber evidence="1">3.1.-.-</ecNumber>
    </recommendedName>
</protein>
<organism>
    <name type="scientific">Streptococcus pneumoniae serotype 2 (strain D39 / NCTC 7466)</name>
    <dbReference type="NCBI Taxonomy" id="373153"/>
    <lineage>
        <taxon>Bacteria</taxon>
        <taxon>Bacillati</taxon>
        <taxon>Bacillota</taxon>
        <taxon>Bacilli</taxon>
        <taxon>Lactobacillales</taxon>
        <taxon>Streptococcaceae</taxon>
        <taxon>Streptococcus</taxon>
    </lineage>
</organism>
<feature type="chain" id="PRO_0000284325" description="Endoribonuclease YbeY">
    <location>
        <begin position="1"/>
        <end position="165"/>
    </location>
</feature>
<feature type="binding site" evidence="1">
    <location>
        <position position="130"/>
    </location>
    <ligand>
        <name>Zn(2+)</name>
        <dbReference type="ChEBI" id="CHEBI:29105"/>
        <note>catalytic</note>
    </ligand>
</feature>
<feature type="binding site" evidence="1">
    <location>
        <position position="134"/>
    </location>
    <ligand>
        <name>Zn(2+)</name>
        <dbReference type="ChEBI" id="CHEBI:29105"/>
        <note>catalytic</note>
    </ligand>
</feature>
<feature type="binding site" evidence="1">
    <location>
        <position position="140"/>
    </location>
    <ligand>
        <name>Zn(2+)</name>
        <dbReference type="ChEBI" id="CHEBI:29105"/>
        <note>catalytic</note>
    </ligand>
</feature>
<dbReference type="EC" id="3.1.-.-" evidence="1"/>
<dbReference type="EMBL" id="CP000410">
    <property type="protein sequence ID" value="ABJ54640.1"/>
    <property type="molecule type" value="Genomic_DNA"/>
</dbReference>
<dbReference type="RefSeq" id="WP_000275156.1">
    <property type="nucleotide sequence ID" value="NZ_JAMLJR010000004.1"/>
</dbReference>
<dbReference type="SMR" id="Q04KW1"/>
<dbReference type="PaxDb" id="373153-SPD_0855"/>
<dbReference type="GeneID" id="93739770"/>
<dbReference type="KEGG" id="spd:SPD_0855"/>
<dbReference type="eggNOG" id="COG0319">
    <property type="taxonomic scope" value="Bacteria"/>
</dbReference>
<dbReference type="HOGENOM" id="CLU_106710_3_0_9"/>
<dbReference type="BioCyc" id="SPNE373153:G1G6V-938-MONOMER"/>
<dbReference type="Proteomes" id="UP000001452">
    <property type="component" value="Chromosome"/>
</dbReference>
<dbReference type="GO" id="GO:0005737">
    <property type="term" value="C:cytoplasm"/>
    <property type="evidence" value="ECO:0007669"/>
    <property type="project" value="UniProtKB-SubCell"/>
</dbReference>
<dbReference type="GO" id="GO:0004222">
    <property type="term" value="F:metalloendopeptidase activity"/>
    <property type="evidence" value="ECO:0007669"/>
    <property type="project" value="InterPro"/>
</dbReference>
<dbReference type="GO" id="GO:0004521">
    <property type="term" value="F:RNA endonuclease activity"/>
    <property type="evidence" value="ECO:0007669"/>
    <property type="project" value="UniProtKB-UniRule"/>
</dbReference>
<dbReference type="GO" id="GO:0008270">
    <property type="term" value="F:zinc ion binding"/>
    <property type="evidence" value="ECO:0007669"/>
    <property type="project" value="UniProtKB-UniRule"/>
</dbReference>
<dbReference type="GO" id="GO:0006364">
    <property type="term" value="P:rRNA processing"/>
    <property type="evidence" value="ECO:0007669"/>
    <property type="project" value="UniProtKB-UniRule"/>
</dbReference>
<dbReference type="Gene3D" id="3.40.390.30">
    <property type="entry name" value="Metalloproteases ('zincins'), catalytic domain"/>
    <property type="match status" value="1"/>
</dbReference>
<dbReference type="HAMAP" id="MF_00009">
    <property type="entry name" value="Endoribonucl_YbeY"/>
    <property type="match status" value="1"/>
</dbReference>
<dbReference type="InterPro" id="IPR023091">
    <property type="entry name" value="MetalPrtase_cat_dom_sf_prd"/>
</dbReference>
<dbReference type="InterPro" id="IPR002036">
    <property type="entry name" value="YbeY"/>
</dbReference>
<dbReference type="InterPro" id="IPR020549">
    <property type="entry name" value="YbeY_CS"/>
</dbReference>
<dbReference type="NCBIfam" id="TIGR00043">
    <property type="entry name" value="rRNA maturation RNase YbeY"/>
    <property type="match status" value="1"/>
</dbReference>
<dbReference type="PANTHER" id="PTHR46986">
    <property type="entry name" value="ENDORIBONUCLEASE YBEY, CHLOROPLASTIC"/>
    <property type="match status" value="1"/>
</dbReference>
<dbReference type="PANTHER" id="PTHR46986:SF1">
    <property type="entry name" value="ENDORIBONUCLEASE YBEY, CHLOROPLASTIC"/>
    <property type="match status" value="1"/>
</dbReference>
<dbReference type="Pfam" id="PF02130">
    <property type="entry name" value="YbeY"/>
    <property type="match status" value="1"/>
</dbReference>
<dbReference type="SUPFAM" id="SSF55486">
    <property type="entry name" value="Metalloproteases ('zincins'), catalytic domain"/>
    <property type="match status" value="1"/>
</dbReference>
<dbReference type="PROSITE" id="PS01306">
    <property type="entry name" value="UPF0054"/>
    <property type="match status" value="1"/>
</dbReference>
<proteinExistence type="inferred from homology"/>
<comment type="function">
    <text evidence="1">Single strand-specific metallo-endoribonuclease involved in late-stage 70S ribosome quality control and in maturation of the 3' terminus of the 16S rRNA.</text>
</comment>
<comment type="cofactor">
    <cofactor evidence="1">
        <name>Zn(2+)</name>
        <dbReference type="ChEBI" id="CHEBI:29105"/>
    </cofactor>
    <text evidence="1">Binds 1 zinc ion.</text>
</comment>
<comment type="subcellular location">
    <subcellularLocation>
        <location evidence="1">Cytoplasm</location>
    </subcellularLocation>
</comment>
<comment type="similarity">
    <text evidence="1">Belongs to the endoribonuclease YbeY family.</text>
</comment>
<reference key="1">
    <citation type="journal article" date="2007" name="J. Bacteriol.">
        <title>Genome sequence of Avery's virulent serotype 2 strain D39 of Streptococcus pneumoniae and comparison with that of unencapsulated laboratory strain R6.</title>
        <authorList>
            <person name="Lanie J.A."/>
            <person name="Ng W.-L."/>
            <person name="Kazmierczak K.M."/>
            <person name="Andrzejewski T.M."/>
            <person name="Davidsen T.M."/>
            <person name="Wayne K.J."/>
            <person name="Tettelin H."/>
            <person name="Glass J.I."/>
            <person name="Winkler M.E."/>
        </authorList>
    </citation>
    <scope>NUCLEOTIDE SEQUENCE [LARGE SCALE GENOMIC DNA]</scope>
    <source>
        <strain>D39 / NCTC 7466</strain>
    </source>
</reference>